<dbReference type="EC" id="2.2.1.2" evidence="1"/>
<dbReference type="EMBL" id="CP000560">
    <property type="protein sequence ID" value="ABS75756.1"/>
    <property type="molecule type" value="Genomic_DNA"/>
</dbReference>
<dbReference type="SMR" id="A7Z9T0"/>
<dbReference type="GeneID" id="93082571"/>
<dbReference type="KEGG" id="bay:RBAM_034270"/>
<dbReference type="HOGENOM" id="CLU_079764_0_0_9"/>
<dbReference type="UniPathway" id="UPA00115">
    <property type="reaction ID" value="UER00414"/>
</dbReference>
<dbReference type="Proteomes" id="UP000001120">
    <property type="component" value="Chromosome"/>
</dbReference>
<dbReference type="GO" id="GO:0005737">
    <property type="term" value="C:cytoplasm"/>
    <property type="evidence" value="ECO:0007669"/>
    <property type="project" value="UniProtKB-SubCell"/>
</dbReference>
<dbReference type="GO" id="GO:0016832">
    <property type="term" value="F:aldehyde-lyase activity"/>
    <property type="evidence" value="ECO:0007669"/>
    <property type="project" value="InterPro"/>
</dbReference>
<dbReference type="GO" id="GO:0004801">
    <property type="term" value="F:transaldolase activity"/>
    <property type="evidence" value="ECO:0007669"/>
    <property type="project" value="UniProtKB-UniRule"/>
</dbReference>
<dbReference type="GO" id="GO:0005975">
    <property type="term" value="P:carbohydrate metabolic process"/>
    <property type="evidence" value="ECO:0007669"/>
    <property type="project" value="InterPro"/>
</dbReference>
<dbReference type="GO" id="GO:0006098">
    <property type="term" value="P:pentose-phosphate shunt"/>
    <property type="evidence" value="ECO:0007669"/>
    <property type="project" value="UniProtKB-UniRule"/>
</dbReference>
<dbReference type="CDD" id="cd00956">
    <property type="entry name" value="Transaldolase_FSA"/>
    <property type="match status" value="1"/>
</dbReference>
<dbReference type="FunFam" id="3.20.20.70:FF:000018">
    <property type="entry name" value="Probable transaldolase"/>
    <property type="match status" value="1"/>
</dbReference>
<dbReference type="Gene3D" id="3.20.20.70">
    <property type="entry name" value="Aldolase class I"/>
    <property type="match status" value="1"/>
</dbReference>
<dbReference type="HAMAP" id="MF_00494">
    <property type="entry name" value="Transaldolase_3b"/>
    <property type="match status" value="1"/>
</dbReference>
<dbReference type="InterPro" id="IPR013785">
    <property type="entry name" value="Aldolase_TIM"/>
</dbReference>
<dbReference type="InterPro" id="IPR001585">
    <property type="entry name" value="TAL/FSA"/>
</dbReference>
<dbReference type="InterPro" id="IPR022999">
    <property type="entry name" value="Transaldolase_3B"/>
</dbReference>
<dbReference type="InterPro" id="IPR004731">
    <property type="entry name" value="Transaldolase_3B/F6P_aldolase"/>
</dbReference>
<dbReference type="InterPro" id="IPR018225">
    <property type="entry name" value="Transaldolase_AS"/>
</dbReference>
<dbReference type="InterPro" id="IPR033919">
    <property type="entry name" value="TSA/FSA_arc/bac"/>
</dbReference>
<dbReference type="NCBIfam" id="TIGR00875">
    <property type="entry name" value="fsa_talC_mipB"/>
    <property type="match status" value="1"/>
</dbReference>
<dbReference type="PANTHER" id="PTHR10683">
    <property type="entry name" value="TRANSALDOLASE"/>
    <property type="match status" value="1"/>
</dbReference>
<dbReference type="PANTHER" id="PTHR10683:SF36">
    <property type="entry name" value="TRANSALDOLASE"/>
    <property type="match status" value="1"/>
</dbReference>
<dbReference type="Pfam" id="PF00923">
    <property type="entry name" value="TAL_FSA"/>
    <property type="match status" value="1"/>
</dbReference>
<dbReference type="SUPFAM" id="SSF51569">
    <property type="entry name" value="Aldolase"/>
    <property type="match status" value="1"/>
</dbReference>
<dbReference type="PROSITE" id="PS01054">
    <property type="entry name" value="TRANSALDOLASE_1"/>
    <property type="match status" value="1"/>
</dbReference>
<dbReference type="PROSITE" id="PS00958">
    <property type="entry name" value="TRANSALDOLASE_2"/>
    <property type="match status" value="1"/>
</dbReference>
<organism>
    <name type="scientific">Bacillus velezensis (strain DSM 23117 / BGSC 10A6 / LMG 26770 / FZB42)</name>
    <name type="common">Bacillus amyloliquefaciens subsp. plantarum</name>
    <dbReference type="NCBI Taxonomy" id="326423"/>
    <lineage>
        <taxon>Bacteria</taxon>
        <taxon>Bacillati</taxon>
        <taxon>Bacillota</taxon>
        <taxon>Bacilli</taxon>
        <taxon>Bacillales</taxon>
        <taxon>Bacillaceae</taxon>
        <taxon>Bacillus</taxon>
        <taxon>Bacillus amyloliquefaciens group</taxon>
    </lineage>
</organism>
<name>TAL_BACVZ</name>
<sequence>MLFFIDTANIDEIKEAYELGVLAGVTTNPSLVAKEADVSFHDRLREITEVVSGSVSAEVISLNAEEMIEEGKELAKIAPNITVKIPMTSEGLKAVKALSDLNIKTNVTLIFSANQALLAARAGATYVSPFLGRLDDIGHNGLELISEIRQIFDIHDIDTQIIAASIRHAQHVTEAALRGAHIGTMPLKVIHQLAKHPLTDKGIEQFLADWNK</sequence>
<reference key="1">
    <citation type="journal article" date="2007" name="Nat. Biotechnol.">
        <title>Comparative analysis of the complete genome sequence of the plant growth-promoting bacterium Bacillus amyloliquefaciens FZB42.</title>
        <authorList>
            <person name="Chen X.H."/>
            <person name="Koumoutsi A."/>
            <person name="Scholz R."/>
            <person name="Eisenreich A."/>
            <person name="Schneider K."/>
            <person name="Heinemeyer I."/>
            <person name="Morgenstern B."/>
            <person name="Voss B."/>
            <person name="Hess W.R."/>
            <person name="Reva O."/>
            <person name="Junge H."/>
            <person name="Voigt B."/>
            <person name="Jungblut P.R."/>
            <person name="Vater J."/>
            <person name="Suessmuth R."/>
            <person name="Liesegang H."/>
            <person name="Strittmatter A."/>
            <person name="Gottschalk G."/>
            <person name="Borriss R."/>
        </authorList>
    </citation>
    <scope>NUCLEOTIDE SEQUENCE [LARGE SCALE GENOMIC DNA]</scope>
    <source>
        <strain>DSM 23117 / BGSC 10A6 / LMG 26770 / FZB42</strain>
    </source>
</reference>
<proteinExistence type="inferred from homology"/>
<protein>
    <recommendedName>
        <fullName evidence="1">Probable transaldolase</fullName>
        <ecNumber evidence="1">2.2.1.2</ecNumber>
    </recommendedName>
</protein>
<feature type="chain" id="PRO_1000126275" description="Probable transaldolase">
    <location>
        <begin position="1"/>
        <end position="212"/>
    </location>
</feature>
<feature type="active site" description="Schiff-base intermediate with substrate" evidence="1">
    <location>
        <position position="84"/>
    </location>
</feature>
<comment type="function">
    <text evidence="1">Transaldolase is important for the balance of metabolites in the pentose-phosphate pathway.</text>
</comment>
<comment type="catalytic activity">
    <reaction evidence="1">
        <text>D-sedoheptulose 7-phosphate + D-glyceraldehyde 3-phosphate = D-erythrose 4-phosphate + beta-D-fructose 6-phosphate</text>
        <dbReference type="Rhea" id="RHEA:17053"/>
        <dbReference type="ChEBI" id="CHEBI:16897"/>
        <dbReference type="ChEBI" id="CHEBI:57483"/>
        <dbReference type="ChEBI" id="CHEBI:57634"/>
        <dbReference type="ChEBI" id="CHEBI:59776"/>
        <dbReference type="EC" id="2.2.1.2"/>
    </reaction>
</comment>
<comment type="pathway">
    <text evidence="1">Carbohydrate degradation; pentose phosphate pathway; D-glyceraldehyde 3-phosphate and beta-D-fructose 6-phosphate from D-ribose 5-phosphate and D-xylulose 5-phosphate (non-oxidative stage): step 2/3.</text>
</comment>
<comment type="subcellular location">
    <subcellularLocation>
        <location evidence="1">Cytoplasm</location>
    </subcellularLocation>
</comment>
<comment type="similarity">
    <text evidence="1">Belongs to the transaldolase family. Type 3B subfamily.</text>
</comment>
<keyword id="KW-0963">Cytoplasm</keyword>
<keyword id="KW-0570">Pentose shunt</keyword>
<keyword id="KW-0704">Schiff base</keyword>
<keyword id="KW-0808">Transferase</keyword>
<accession>A7Z9T0</accession>
<evidence type="ECO:0000255" key="1">
    <source>
        <dbReference type="HAMAP-Rule" id="MF_00494"/>
    </source>
</evidence>
<gene>
    <name evidence="1" type="primary">tal</name>
    <name type="ordered locus">RBAM_034270</name>
</gene>